<name>RL15_LAWIP</name>
<evidence type="ECO:0000255" key="1">
    <source>
        <dbReference type="HAMAP-Rule" id="MF_01341"/>
    </source>
</evidence>
<evidence type="ECO:0000256" key="2">
    <source>
        <dbReference type="SAM" id="MobiDB-lite"/>
    </source>
</evidence>
<evidence type="ECO:0000305" key="3"/>
<keyword id="KW-1185">Reference proteome</keyword>
<keyword id="KW-0687">Ribonucleoprotein</keyword>
<keyword id="KW-0689">Ribosomal protein</keyword>
<keyword id="KW-0694">RNA-binding</keyword>
<keyword id="KW-0699">rRNA-binding</keyword>
<sequence length="149" mass="16395">MNLTTLYPFLEERKLRKRVGRGSASGLGCTSGKGNKGQNARSGGGVRPGFEGGQMPLQRRLPKHGFKNAFFKVEYAIFNLDWLTTFFKGKNEILLEDIYSHKLCSVGTPVKILGSGSISNIVTIEAHKFSRSALKKLHEVGGQAKIIEK</sequence>
<comment type="function">
    <text evidence="1">Binds to the 23S rRNA.</text>
</comment>
<comment type="subunit">
    <text evidence="1">Part of the 50S ribosomal subunit.</text>
</comment>
<comment type="similarity">
    <text evidence="1">Belongs to the universal ribosomal protein uL15 family.</text>
</comment>
<dbReference type="EMBL" id="AM180252">
    <property type="protein sequence ID" value="CAJ55030.1"/>
    <property type="molecule type" value="Genomic_DNA"/>
</dbReference>
<dbReference type="RefSeq" id="WP_011527059.1">
    <property type="nucleotide sequence ID" value="NC_008011.1"/>
</dbReference>
<dbReference type="SMR" id="Q1MPP7"/>
<dbReference type="STRING" id="363253.LI0976"/>
<dbReference type="KEGG" id="lip:LI0976"/>
<dbReference type="eggNOG" id="COG0200">
    <property type="taxonomic scope" value="Bacteria"/>
</dbReference>
<dbReference type="HOGENOM" id="CLU_055188_4_2_7"/>
<dbReference type="OrthoDB" id="9810293at2"/>
<dbReference type="Proteomes" id="UP000002430">
    <property type="component" value="Chromosome"/>
</dbReference>
<dbReference type="GO" id="GO:0022625">
    <property type="term" value="C:cytosolic large ribosomal subunit"/>
    <property type="evidence" value="ECO:0007669"/>
    <property type="project" value="TreeGrafter"/>
</dbReference>
<dbReference type="GO" id="GO:0019843">
    <property type="term" value="F:rRNA binding"/>
    <property type="evidence" value="ECO:0007669"/>
    <property type="project" value="UniProtKB-UniRule"/>
</dbReference>
<dbReference type="GO" id="GO:0003735">
    <property type="term" value="F:structural constituent of ribosome"/>
    <property type="evidence" value="ECO:0007669"/>
    <property type="project" value="InterPro"/>
</dbReference>
<dbReference type="GO" id="GO:0006412">
    <property type="term" value="P:translation"/>
    <property type="evidence" value="ECO:0007669"/>
    <property type="project" value="UniProtKB-UniRule"/>
</dbReference>
<dbReference type="Gene3D" id="3.100.10.10">
    <property type="match status" value="1"/>
</dbReference>
<dbReference type="HAMAP" id="MF_01341">
    <property type="entry name" value="Ribosomal_uL15"/>
    <property type="match status" value="1"/>
</dbReference>
<dbReference type="InterPro" id="IPR030878">
    <property type="entry name" value="Ribosomal_uL15"/>
</dbReference>
<dbReference type="InterPro" id="IPR021131">
    <property type="entry name" value="Ribosomal_uL15/eL18"/>
</dbReference>
<dbReference type="InterPro" id="IPR036227">
    <property type="entry name" value="Ribosomal_uL15/eL18_sf"/>
</dbReference>
<dbReference type="InterPro" id="IPR005749">
    <property type="entry name" value="Ribosomal_uL15_bac-type"/>
</dbReference>
<dbReference type="InterPro" id="IPR001196">
    <property type="entry name" value="Ribosomal_uL15_CS"/>
</dbReference>
<dbReference type="NCBIfam" id="TIGR01071">
    <property type="entry name" value="rplO_bact"/>
    <property type="match status" value="1"/>
</dbReference>
<dbReference type="PANTHER" id="PTHR12934">
    <property type="entry name" value="50S RIBOSOMAL PROTEIN L15"/>
    <property type="match status" value="1"/>
</dbReference>
<dbReference type="PANTHER" id="PTHR12934:SF11">
    <property type="entry name" value="LARGE RIBOSOMAL SUBUNIT PROTEIN UL15M"/>
    <property type="match status" value="1"/>
</dbReference>
<dbReference type="Pfam" id="PF00828">
    <property type="entry name" value="Ribosomal_L27A"/>
    <property type="match status" value="1"/>
</dbReference>
<dbReference type="SUPFAM" id="SSF52080">
    <property type="entry name" value="Ribosomal proteins L15p and L18e"/>
    <property type="match status" value="1"/>
</dbReference>
<dbReference type="PROSITE" id="PS00475">
    <property type="entry name" value="RIBOSOMAL_L15"/>
    <property type="match status" value="1"/>
</dbReference>
<accession>Q1MPP7</accession>
<feature type="chain" id="PRO_0000251524" description="Large ribosomal subunit protein uL15">
    <location>
        <begin position="1"/>
        <end position="149"/>
    </location>
</feature>
<feature type="region of interest" description="Disordered" evidence="2">
    <location>
        <begin position="21"/>
        <end position="54"/>
    </location>
</feature>
<feature type="compositionally biased region" description="Gly residues" evidence="2">
    <location>
        <begin position="23"/>
        <end position="35"/>
    </location>
</feature>
<feature type="compositionally biased region" description="Gly residues" evidence="2">
    <location>
        <begin position="42"/>
        <end position="52"/>
    </location>
</feature>
<protein>
    <recommendedName>
        <fullName evidence="1">Large ribosomal subunit protein uL15</fullName>
    </recommendedName>
    <alternativeName>
        <fullName evidence="3">50S ribosomal protein L15</fullName>
    </alternativeName>
</protein>
<organism>
    <name type="scientific">Lawsonia intracellularis (strain PHE/MN1-00)</name>
    <dbReference type="NCBI Taxonomy" id="363253"/>
    <lineage>
        <taxon>Bacteria</taxon>
        <taxon>Pseudomonadati</taxon>
        <taxon>Thermodesulfobacteriota</taxon>
        <taxon>Desulfovibrionia</taxon>
        <taxon>Desulfovibrionales</taxon>
        <taxon>Desulfovibrionaceae</taxon>
        <taxon>Lawsonia</taxon>
    </lineage>
</organism>
<gene>
    <name evidence="1" type="primary">rplO</name>
    <name type="ordered locus">LI0976</name>
</gene>
<proteinExistence type="inferred from homology"/>
<reference key="1">
    <citation type="submission" date="2005-11" db="EMBL/GenBank/DDBJ databases">
        <title>The complete genome sequence of Lawsonia intracellularis: the causative agent of proliferative enteropathy.</title>
        <authorList>
            <person name="Kaur K."/>
            <person name="Zhang Q."/>
            <person name="Beckler D."/>
            <person name="Munir S."/>
            <person name="Li L."/>
            <person name="Kinsley K."/>
            <person name="Herron L."/>
            <person name="Peterson A."/>
            <person name="May B."/>
            <person name="Singh S."/>
            <person name="Gebhart C."/>
            <person name="Kapur V."/>
        </authorList>
    </citation>
    <scope>NUCLEOTIDE SEQUENCE [LARGE SCALE GENOMIC DNA]</scope>
    <source>
        <strain>PHE/MN1-00</strain>
    </source>
</reference>